<proteinExistence type="inferred from homology"/>
<organism>
    <name type="scientific">Salmonella enteritidis PT4 (strain P125109)</name>
    <dbReference type="NCBI Taxonomy" id="550537"/>
    <lineage>
        <taxon>Bacteria</taxon>
        <taxon>Pseudomonadati</taxon>
        <taxon>Pseudomonadota</taxon>
        <taxon>Gammaproteobacteria</taxon>
        <taxon>Enterobacterales</taxon>
        <taxon>Enterobacteriaceae</taxon>
        <taxon>Salmonella</taxon>
    </lineage>
</organism>
<gene>
    <name evidence="1" type="primary">rimO</name>
    <name type="ordered locus">SEN0798</name>
</gene>
<name>RIMO_SALEP</name>
<protein>
    <recommendedName>
        <fullName evidence="1">Ribosomal protein uS12 methylthiotransferase RimO</fullName>
        <shortName evidence="1">uS12 MTTase</shortName>
        <shortName evidence="1">uS12 methylthiotransferase</shortName>
        <ecNumber evidence="1">2.8.4.4</ecNumber>
    </recommendedName>
    <alternativeName>
        <fullName evidence="1">Ribosomal protein uS12 (aspartate-C(3))-methylthiotransferase</fullName>
    </alternativeName>
    <alternativeName>
        <fullName evidence="1">Ribosome maturation factor RimO</fullName>
    </alternativeName>
</protein>
<keyword id="KW-0004">4Fe-4S</keyword>
<keyword id="KW-0963">Cytoplasm</keyword>
<keyword id="KW-0408">Iron</keyword>
<keyword id="KW-0411">Iron-sulfur</keyword>
<keyword id="KW-0479">Metal-binding</keyword>
<keyword id="KW-0949">S-adenosyl-L-methionine</keyword>
<keyword id="KW-0808">Transferase</keyword>
<comment type="function">
    <text evidence="1">Catalyzes the methylthiolation of an aspartic acid residue of ribosomal protein uS12.</text>
</comment>
<comment type="catalytic activity">
    <reaction evidence="1">
        <text>L-aspartate(89)-[ribosomal protein uS12]-hydrogen + (sulfur carrier)-SH + AH2 + 2 S-adenosyl-L-methionine = 3-methylsulfanyl-L-aspartate(89)-[ribosomal protein uS12]-hydrogen + (sulfur carrier)-H + 5'-deoxyadenosine + L-methionine + A + S-adenosyl-L-homocysteine + 2 H(+)</text>
        <dbReference type="Rhea" id="RHEA:37087"/>
        <dbReference type="Rhea" id="RHEA-COMP:10460"/>
        <dbReference type="Rhea" id="RHEA-COMP:10461"/>
        <dbReference type="Rhea" id="RHEA-COMP:14737"/>
        <dbReference type="Rhea" id="RHEA-COMP:14739"/>
        <dbReference type="ChEBI" id="CHEBI:13193"/>
        <dbReference type="ChEBI" id="CHEBI:15378"/>
        <dbReference type="ChEBI" id="CHEBI:17319"/>
        <dbReference type="ChEBI" id="CHEBI:17499"/>
        <dbReference type="ChEBI" id="CHEBI:29917"/>
        <dbReference type="ChEBI" id="CHEBI:29961"/>
        <dbReference type="ChEBI" id="CHEBI:57844"/>
        <dbReference type="ChEBI" id="CHEBI:57856"/>
        <dbReference type="ChEBI" id="CHEBI:59789"/>
        <dbReference type="ChEBI" id="CHEBI:64428"/>
        <dbReference type="ChEBI" id="CHEBI:73599"/>
        <dbReference type="EC" id="2.8.4.4"/>
    </reaction>
</comment>
<comment type="cofactor">
    <cofactor evidence="1">
        <name>[4Fe-4S] cluster</name>
        <dbReference type="ChEBI" id="CHEBI:49883"/>
    </cofactor>
    <text evidence="1">Binds 2 [4Fe-4S] clusters. One cluster is coordinated with 3 cysteines and an exchangeable S-adenosyl-L-methionine.</text>
</comment>
<comment type="subcellular location">
    <subcellularLocation>
        <location evidence="1">Cytoplasm</location>
    </subcellularLocation>
</comment>
<comment type="similarity">
    <text evidence="1">Belongs to the methylthiotransferase family. RimO subfamily.</text>
</comment>
<dbReference type="EC" id="2.8.4.4" evidence="1"/>
<dbReference type="EMBL" id="AM933172">
    <property type="protein sequence ID" value="CAR32381.1"/>
    <property type="molecule type" value="Genomic_DNA"/>
</dbReference>
<dbReference type="RefSeq" id="WP_000073317.1">
    <property type="nucleotide sequence ID" value="NC_011294.1"/>
</dbReference>
<dbReference type="SMR" id="B5QXV6"/>
<dbReference type="KEGG" id="set:SEN0798"/>
<dbReference type="HOGENOM" id="CLU_018697_0_0_6"/>
<dbReference type="Proteomes" id="UP000000613">
    <property type="component" value="Chromosome"/>
</dbReference>
<dbReference type="GO" id="GO:0005829">
    <property type="term" value="C:cytosol"/>
    <property type="evidence" value="ECO:0007669"/>
    <property type="project" value="TreeGrafter"/>
</dbReference>
<dbReference type="GO" id="GO:0051539">
    <property type="term" value="F:4 iron, 4 sulfur cluster binding"/>
    <property type="evidence" value="ECO:0007669"/>
    <property type="project" value="UniProtKB-UniRule"/>
</dbReference>
<dbReference type="GO" id="GO:0035599">
    <property type="term" value="F:aspartic acid methylthiotransferase activity"/>
    <property type="evidence" value="ECO:0007669"/>
    <property type="project" value="TreeGrafter"/>
</dbReference>
<dbReference type="GO" id="GO:0046872">
    <property type="term" value="F:metal ion binding"/>
    <property type="evidence" value="ECO:0007669"/>
    <property type="project" value="UniProtKB-KW"/>
</dbReference>
<dbReference type="GO" id="GO:0103039">
    <property type="term" value="F:protein methylthiotransferase activity"/>
    <property type="evidence" value="ECO:0007669"/>
    <property type="project" value="UniProtKB-EC"/>
</dbReference>
<dbReference type="GO" id="GO:0006400">
    <property type="term" value="P:tRNA modification"/>
    <property type="evidence" value="ECO:0007669"/>
    <property type="project" value="InterPro"/>
</dbReference>
<dbReference type="CDD" id="cd01335">
    <property type="entry name" value="Radical_SAM"/>
    <property type="match status" value="1"/>
</dbReference>
<dbReference type="FunFam" id="2.40.50.140:FF:000060">
    <property type="entry name" value="Ribosomal protein S12 methylthiotransferase RimO"/>
    <property type="match status" value="1"/>
</dbReference>
<dbReference type="FunFam" id="3.40.50.12160:FF:000002">
    <property type="entry name" value="Ribosomal protein S12 methylthiotransferase RimO"/>
    <property type="match status" value="1"/>
</dbReference>
<dbReference type="FunFam" id="3.80.30.20:FF:000001">
    <property type="entry name" value="tRNA-2-methylthio-N(6)-dimethylallyladenosine synthase 2"/>
    <property type="match status" value="1"/>
</dbReference>
<dbReference type="Gene3D" id="3.40.50.12160">
    <property type="entry name" value="Methylthiotransferase, N-terminal domain"/>
    <property type="match status" value="1"/>
</dbReference>
<dbReference type="Gene3D" id="2.40.50.140">
    <property type="entry name" value="Nucleic acid-binding proteins"/>
    <property type="match status" value="1"/>
</dbReference>
<dbReference type="Gene3D" id="3.80.30.20">
    <property type="entry name" value="tm_1862 like domain"/>
    <property type="match status" value="1"/>
</dbReference>
<dbReference type="HAMAP" id="MF_01865">
    <property type="entry name" value="MTTase_RimO"/>
    <property type="match status" value="1"/>
</dbReference>
<dbReference type="InterPro" id="IPR006638">
    <property type="entry name" value="Elp3/MiaA/NifB-like_rSAM"/>
</dbReference>
<dbReference type="InterPro" id="IPR005839">
    <property type="entry name" value="Methylthiotransferase"/>
</dbReference>
<dbReference type="InterPro" id="IPR020612">
    <property type="entry name" value="Methylthiotransferase_CS"/>
</dbReference>
<dbReference type="InterPro" id="IPR013848">
    <property type="entry name" value="Methylthiotransferase_N"/>
</dbReference>
<dbReference type="InterPro" id="IPR038135">
    <property type="entry name" value="Methylthiotransferase_N_sf"/>
</dbReference>
<dbReference type="InterPro" id="IPR012340">
    <property type="entry name" value="NA-bd_OB-fold"/>
</dbReference>
<dbReference type="InterPro" id="IPR005840">
    <property type="entry name" value="Ribosomal_uS12_MeSTrfase_RimO"/>
</dbReference>
<dbReference type="InterPro" id="IPR007197">
    <property type="entry name" value="rSAM"/>
</dbReference>
<dbReference type="InterPro" id="IPR023404">
    <property type="entry name" value="rSAM_horseshoe"/>
</dbReference>
<dbReference type="InterPro" id="IPR002792">
    <property type="entry name" value="TRAM_dom"/>
</dbReference>
<dbReference type="NCBIfam" id="TIGR01125">
    <property type="entry name" value="30S ribosomal protein S12 methylthiotransferase RimO"/>
    <property type="match status" value="1"/>
</dbReference>
<dbReference type="NCBIfam" id="TIGR00089">
    <property type="entry name" value="MiaB/RimO family radical SAM methylthiotransferase"/>
    <property type="match status" value="1"/>
</dbReference>
<dbReference type="PANTHER" id="PTHR43837">
    <property type="entry name" value="RIBOSOMAL PROTEIN S12 METHYLTHIOTRANSFERASE RIMO"/>
    <property type="match status" value="1"/>
</dbReference>
<dbReference type="PANTHER" id="PTHR43837:SF1">
    <property type="entry name" value="RIBOSOMAL PROTEIN US12 METHYLTHIOTRANSFERASE RIMO"/>
    <property type="match status" value="1"/>
</dbReference>
<dbReference type="Pfam" id="PF04055">
    <property type="entry name" value="Radical_SAM"/>
    <property type="match status" value="1"/>
</dbReference>
<dbReference type="Pfam" id="PF18693">
    <property type="entry name" value="TRAM_2"/>
    <property type="match status" value="1"/>
</dbReference>
<dbReference type="Pfam" id="PF00919">
    <property type="entry name" value="UPF0004"/>
    <property type="match status" value="1"/>
</dbReference>
<dbReference type="SFLD" id="SFLDG01082">
    <property type="entry name" value="B12-binding_domain_containing"/>
    <property type="match status" value="1"/>
</dbReference>
<dbReference type="SFLD" id="SFLDG01061">
    <property type="entry name" value="methylthiotransferase"/>
    <property type="match status" value="1"/>
</dbReference>
<dbReference type="SFLD" id="SFLDF00274">
    <property type="entry name" value="ribosomal_protein_S12_methylth"/>
    <property type="match status" value="1"/>
</dbReference>
<dbReference type="SMART" id="SM00729">
    <property type="entry name" value="Elp3"/>
    <property type="match status" value="1"/>
</dbReference>
<dbReference type="SUPFAM" id="SSF102114">
    <property type="entry name" value="Radical SAM enzymes"/>
    <property type="match status" value="1"/>
</dbReference>
<dbReference type="PROSITE" id="PS51449">
    <property type="entry name" value="MTTASE_N"/>
    <property type="match status" value="1"/>
</dbReference>
<dbReference type="PROSITE" id="PS01278">
    <property type="entry name" value="MTTASE_RADICAL"/>
    <property type="match status" value="1"/>
</dbReference>
<dbReference type="PROSITE" id="PS51918">
    <property type="entry name" value="RADICAL_SAM"/>
    <property type="match status" value="1"/>
</dbReference>
<dbReference type="PROSITE" id="PS50926">
    <property type="entry name" value="TRAM"/>
    <property type="match status" value="1"/>
</dbReference>
<accession>B5QXV6</accession>
<reference key="1">
    <citation type="journal article" date="2008" name="Genome Res.">
        <title>Comparative genome analysis of Salmonella enteritidis PT4 and Salmonella gallinarum 287/91 provides insights into evolutionary and host adaptation pathways.</title>
        <authorList>
            <person name="Thomson N.R."/>
            <person name="Clayton D.J."/>
            <person name="Windhorst D."/>
            <person name="Vernikos G."/>
            <person name="Davidson S."/>
            <person name="Churcher C."/>
            <person name="Quail M.A."/>
            <person name="Stevens M."/>
            <person name="Jones M.A."/>
            <person name="Watson M."/>
            <person name="Barron A."/>
            <person name="Layton A."/>
            <person name="Pickard D."/>
            <person name="Kingsley R.A."/>
            <person name="Bignell A."/>
            <person name="Clark L."/>
            <person name="Harris B."/>
            <person name="Ormond D."/>
            <person name="Abdellah Z."/>
            <person name="Brooks K."/>
            <person name="Cherevach I."/>
            <person name="Chillingworth T."/>
            <person name="Woodward J."/>
            <person name="Norberczak H."/>
            <person name="Lord A."/>
            <person name="Arrowsmith C."/>
            <person name="Jagels K."/>
            <person name="Moule S."/>
            <person name="Mungall K."/>
            <person name="Saunders M."/>
            <person name="Whitehead S."/>
            <person name="Chabalgoity J.A."/>
            <person name="Maskell D."/>
            <person name="Humphreys T."/>
            <person name="Roberts M."/>
            <person name="Barrow P.A."/>
            <person name="Dougan G."/>
            <person name="Parkhill J."/>
        </authorList>
    </citation>
    <scope>NUCLEOTIDE SEQUENCE [LARGE SCALE GENOMIC DNA]</scope>
    <source>
        <strain>P125109</strain>
    </source>
</reference>
<feature type="chain" id="PRO_0000374989" description="Ribosomal protein uS12 methylthiotransferase RimO">
    <location>
        <begin position="1"/>
        <end position="441"/>
    </location>
</feature>
<feature type="domain" description="MTTase N-terminal" evidence="1">
    <location>
        <begin position="8"/>
        <end position="118"/>
    </location>
</feature>
<feature type="domain" description="Radical SAM core" evidence="2">
    <location>
        <begin position="136"/>
        <end position="373"/>
    </location>
</feature>
<feature type="domain" description="TRAM" evidence="1">
    <location>
        <begin position="376"/>
        <end position="441"/>
    </location>
</feature>
<feature type="binding site" evidence="1">
    <location>
        <position position="17"/>
    </location>
    <ligand>
        <name>[4Fe-4S] cluster</name>
        <dbReference type="ChEBI" id="CHEBI:49883"/>
        <label>1</label>
    </ligand>
</feature>
<feature type="binding site" evidence="1">
    <location>
        <position position="53"/>
    </location>
    <ligand>
        <name>[4Fe-4S] cluster</name>
        <dbReference type="ChEBI" id="CHEBI:49883"/>
        <label>1</label>
    </ligand>
</feature>
<feature type="binding site" evidence="1">
    <location>
        <position position="82"/>
    </location>
    <ligand>
        <name>[4Fe-4S] cluster</name>
        <dbReference type="ChEBI" id="CHEBI:49883"/>
        <label>1</label>
    </ligand>
</feature>
<feature type="binding site" evidence="1">
    <location>
        <position position="150"/>
    </location>
    <ligand>
        <name>[4Fe-4S] cluster</name>
        <dbReference type="ChEBI" id="CHEBI:49883"/>
        <label>2</label>
        <note>4Fe-4S-S-AdoMet</note>
    </ligand>
</feature>
<feature type="binding site" evidence="1">
    <location>
        <position position="154"/>
    </location>
    <ligand>
        <name>[4Fe-4S] cluster</name>
        <dbReference type="ChEBI" id="CHEBI:49883"/>
        <label>2</label>
        <note>4Fe-4S-S-AdoMet</note>
    </ligand>
</feature>
<feature type="binding site" evidence="1">
    <location>
        <position position="157"/>
    </location>
    <ligand>
        <name>[4Fe-4S] cluster</name>
        <dbReference type="ChEBI" id="CHEBI:49883"/>
        <label>2</label>
        <note>4Fe-4S-S-AdoMet</note>
    </ligand>
</feature>
<sequence>MSNVTHQPKIGFVSLGCPKNLVDSERILTELRTEGYDVVPRYDDADMVIVNTCGFIDSAVQESLEAIGEALNENGKVIVTGCLGAKEDQIREVHPKVLEITGPHSYEQVLQHVHHYVPKPKHNPFLSLVPEQGVKLTPRHYAYLKISEGCNHRCTFCIIPSMRGDLVSRPIGDVLSEAKRLVDAGVKEILVISQDTSAYGVDVKHRTGFHNGEPVKTSMVSLCEQLSKLGVWTRLHYVYPYPHVDDVIPLMAEGKILPYLDIPLQHASPRILKLMKRPGSVDRQLARIKQWREICPELTLRSTFIVGFPGETEEDFQMLLDFLKEARLDRVGCFKYSPVEGAGANELPDQVPEEVKEERWNRFMQLQQQISAERLQEKVGREILVIVDEVDEEGAIGRSMADAPEIDGAVYLNGETNVKPGDIVRVKVENADEYDLWGSRV</sequence>
<evidence type="ECO:0000255" key="1">
    <source>
        <dbReference type="HAMAP-Rule" id="MF_01865"/>
    </source>
</evidence>
<evidence type="ECO:0000255" key="2">
    <source>
        <dbReference type="PROSITE-ProRule" id="PRU01266"/>
    </source>
</evidence>